<comment type="function">
    <text evidence="1">Can catalyze the hydrolysis of ATP in the presence of single-stranded DNA, the ATP-dependent uptake of single-stranded DNA by duplex DNA, and the ATP-dependent hybridization of homologous single-stranded DNAs. It interacts with LexA causing its activation and leading to its autocatalytic cleavage.</text>
</comment>
<comment type="subcellular location">
    <subcellularLocation>
        <location evidence="1">Cytoplasm</location>
    </subcellularLocation>
</comment>
<comment type="similarity">
    <text evidence="1">Belongs to the RecA family.</text>
</comment>
<dbReference type="EMBL" id="X94233">
    <property type="protein sequence ID" value="CAA63924.1"/>
    <property type="molecule type" value="Genomic_DNA"/>
</dbReference>
<dbReference type="SMR" id="P95846"/>
<dbReference type="GO" id="GO:0005829">
    <property type="term" value="C:cytosol"/>
    <property type="evidence" value="ECO:0007669"/>
    <property type="project" value="TreeGrafter"/>
</dbReference>
<dbReference type="GO" id="GO:0005524">
    <property type="term" value="F:ATP binding"/>
    <property type="evidence" value="ECO:0007669"/>
    <property type="project" value="UniProtKB-UniRule"/>
</dbReference>
<dbReference type="GO" id="GO:0016887">
    <property type="term" value="F:ATP hydrolysis activity"/>
    <property type="evidence" value="ECO:0007669"/>
    <property type="project" value="InterPro"/>
</dbReference>
<dbReference type="GO" id="GO:0140664">
    <property type="term" value="F:ATP-dependent DNA damage sensor activity"/>
    <property type="evidence" value="ECO:0007669"/>
    <property type="project" value="InterPro"/>
</dbReference>
<dbReference type="GO" id="GO:0003684">
    <property type="term" value="F:damaged DNA binding"/>
    <property type="evidence" value="ECO:0007669"/>
    <property type="project" value="UniProtKB-UniRule"/>
</dbReference>
<dbReference type="GO" id="GO:0003697">
    <property type="term" value="F:single-stranded DNA binding"/>
    <property type="evidence" value="ECO:0007669"/>
    <property type="project" value="UniProtKB-UniRule"/>
</dbReference>
<dbReference type="GO" id="GO:0006310">
    <property type="term" value="P:DNA recombination"/>
    <property type="evidence" value="ECO:0007669"/>
    <property type="project" value="UniProtKB-UniRule"/>
</dbReference>
<dbReference type="GO" id="GO:0006281">
    <property type="term" value="P:DNA repair"/>
    <property type="evidence" value="ECO:0007669"/>
    <property type="project" value="UniProtKB-UniRule"/>
</dbReference>
<dbReference type="GO" id="GO:0009432">
    <property type="term" value="P:SOS response"/>
    <property type="evidence" value="ECO:0007669"/>
    <property type="project" value="UniProtKB-UniRule"/>
</dbReference>
<dbReference type="CDD" id="cd00983">
    <property type="entry name" value="RecA"/>
    <property type="match status" value="1"/>
</dbReference>
<dbReference type="FunFam" id="3.40.50.300:FF:000087">
    <property type="entry name" value="Recombinase RecA"/>
    <property type="match status" value="1"/>
</dbReference>
<dbReference type="Gene3D" id="3.40.50.300">
    <property type="entry name" value="P-loop containing nucleotide triphosphate hydrolases"/>
    <property type="match status" value="1"/>
</dbReference>
<dbReference type="HAMAP" id="MF_00268">
    <property type="entry name" value="RecA"/>
    <property type="match status" value="1"/>
</dbReference>
<dbReference type="InterPro" id="IPR003593">
    <property type="entry name" value="AAA+_ATPase"/>
</dbReference>
<dbReference type="InterPro" id="IPR013765">
    <property type="entry name" value="DNA_recomb/repair_RecA"/>
</dbReference>
<dbReference type="InterPro" id="IPR020584">
    <property type="entry name" value="DNA_recomb/repair_RecA_CS"/>
</dbReference>
<dbReference type="InterPro" id="IPR027417">
    <property type="entry name" value="P-loop_NTPase"/>
</dbReference>
<dbReference type="InterPro" id="IPR049261">
    <property type="entry name" value="RecA-like_C"/>
</dbReference>
<dbReference type="InterPro" id="IPR049428">
    <property type="entry name" value="RecA-like_N"/>
</dbReference>
<dbReference type="InterPro" id="IPR020588">
    <property type="entry name" value="RecA_ATP-bd"/>
</dbReference>
<dbReference type="InterPro" id="IPR023400">
    <property type="entry name" value="RecA_C_sf"/>
</dbReference>
<dbReference type="InterPro" id="IPR020587">
    <property type="entry name" value="RecA_monomer-monomer_interface"/>
</dbReference>
<dbReference type="NCBIfam" id="TIGR02012">
    <property type="entry name" value="tigrfam_recA"/>
    <property type="match status" value="1"/>
</dbReference>
<dbReference type="PANTHER" id="PTHR45900:SF1">
    <property type="entry name" value="MITOCHONDRIAL DNA REPAIR PROTEIN RECA HOMOLOG-RELATED"/>
    <property type="match status" value="1"/>
</dbReference>
<dbReference type="PANTHER" id="PTHR45900">
    <property type="entry name" value="RECA"/>
    <property type="match status" value="1"/>
</dbReference>
<dbReference type="Pfam" id="PF00154">
    <property type="entry name" value="RecA"/>
    <property type="match status" value="1"/>
</dbReference>
<dbReference type="Pfam" id="PF21096">
    <property type="entry name" value="RecA_C"/>
    <property type="match status" value="1"/>
</dbReference>
<dbReference type="PRINTS" id="PR00142">
    <property type="entry name" value="RECA"/>
</dbReference>
<dbReference type="SMART" id="SM00382">
    <property type="entry name" value="AAA"/>
    <property type="match status" value="1"/>
</dbReference>
<dbReference type="SUPFAM" id="SSF52540">
    <property type="entry name" value="P-loop containing nucleoside triphosphate hydrolases"/>
    <property type="match status" value="1"/>
</dbReference>
<dbReference type="SUPFAM" id="SSF54752">
    <property type="entry name" value="RecA protein, C-terminal domain"/>
    <property type="match status" value="1"/>
</dbReference>
<dbReference type="PROSITE" id="PS00321">
    <property type="entry name" value="RECA_1"/>
    <property type="match status" value="1"/>
</dbReference>
<dbReference type="PROSITE" id="PS50162">
    <property type="entry name" value="RECA_2"/>
    <property type="match status" value="1"/>
</dbReference>
<dbReference type="PROSITE" id="PS50163">
    <property type="entry name" value="RECA_3"/>
    <property type="match status" value="1"/>
</dbReference>
<protein>
    <recommendedName>
        <fullName evidence="1">Protein RecA</fullName>
    </recommendedName>
    <alternativeName>
        <fullName evidence="1">Recombinase A</fullName>
    </alternativeName>
</protein>
<feature type="chain" id="PRO_0000122866" description="Protein RecA">
    <location>
        <begin position="1"/>
        <end position="376"/>
    </location>
</feature>
<feature type="region of interest" description="Disordered" evidence="2">
    <location>
        <begin position="329"/>
        <end position="376"/>
    </location>
</feature>
<feature type="compositionally biased region" description="Low complexity" evidence="2">
    <location>
        <begin position="338"/>
        <end position="376"/>
    </location>
</feature>
<feature type="binding site" evidence="1">
    <location>
        <begin position="66"/>
        <end position="73"/>
    </location>
    <ligand>
        <name>ATP</name>
        <dbReference type="ChEBI" id="CHEBI:30616"/>
    </ligand>
</feature>
<organism>
    <name type="scientific">Streptomyces rimosus</name>
    <dbReference type="NCBI Taxonomy" id="1927"/>
    <lineage>
        <taxon>Bacteria</taxon>
        <taxon>Bacillati</taxon>
        <taxon>Actinomycetota</taxon>
        <taxon>Actinomycetes</taxon>
        <taxon>Kitasatosporales</taxon>
        <taxon>Streptomycetaceae</taxon>
        <taxon>Streptomyces</taxon>
    </lineage>
</organism>
<gene>
    <name evidence="1" type="primary">recA</name>
</gene>
<accession>P95846</accession>
<name>RECA_STRRM</name>
<evidence type="ECO:0000255" key="1">
    <source>
        <dbReference type="HAMAP-Rule" id="MF_00268"/>
    </source>
</evidence>
<evidence type="ECO:0000256" key="2">
    <source>
        <dbReference type="SAM" id="MobiDB-lite"/>
    </source>
</evidence>
<proteinExistence type="inferred from homology"/>
<keyword id="KW-0067">ATP-binding</keyword>
<keyword id="KW-0963">Cytoplasm</keyword>
<keyword id="KW-0227">DNA damage</keyword>
<keyword id="KW-0233">DNA recombination</keyword>
<keyword id="KW-0234">DNA repair</keyword>
<keyword id="KW-0238">DNA-binding</keyword>
<keyword id="KW-0547">Nucleotide-binding</keyword>
<keyword id="KW-0742">SOS response</keyword>
<sequence length="376" mass="39702">MAGTDREKALDAALAQIERQFGKGAVMRMGERSKEPIEVIPTASTALDVALGVGGIPRGRVVEIYGPESSGKTTLTLHAVANAQKAGGSVAFIDAEHALDPEYAKKLGVDTDALILSQPDNGEQALEIVDMLVRSGALDLIVIDSVAALVPRAEIEGEMGDSHVGLQARLMSQALRKITSALNQSKTTAIFINQLREKIGVMFGSPETTTGGRALKFYASVRIDIRRIETLKDGTEAVGNRTRCKVVKNKVAPPFKQAEFDILYGQGISREGGLIDMGVEHGFIRKSGAWYTYEGDQLGQGKENARNFLKDNPDLANEVEKKIKEKLGVGVKPEDLTAEPGADAAGAAADAEAPAKSVPAPAAKSAKGSKAAAAKS</sequence>
<reference key="1">
    <citation type="journal article" date="1997" name="Res. Microbiol.">
        <title>The recA gene from Streptomyces rimosus R6: sequence and expression in Escherichia coli.</title>
        <authorList>
            <person name="Mikoc A."/>
            <person name="Vujaklija D."/>
            <person name="Gamulin V."/>
        </authorList>
    </citation>
    <scope>NUCLEOTIDE SEQUENCE [GENOMIC DNA]</scope>
    <source>
        <strain>R6</strain>
    </source>
</reference>